<accession>I3R9N2</accession>
<accession>Q703H9</accession>
<proteinExistence type="evidence at protein level"/>
<feature type="chain" id="PRO_0000428890" description="Putative respiratory nitrate reductase subunit Rieske">
    <location>
        <begin position="1"/>
        <end position="220"/>
    </location>
</feature>
<feature type="domain" description="Rieske" evidence="1">
    <location>
        <begin position="118"/>
        <end position="206"/>
    </location>
</feature>
<feature type="binding site" evidence="1">
    <location>
        <position position="151"/>
    </location>
    <ligand>
        <name>[2Fe-2S] cluster</name>
        <dbReference type="ChEBI" id="CHEBI:190135"/>
    </ligand>
</feature>
<feature type="binding site" evidence="1">
    <location>
        <position position="153"/>
    </location>
    <ligand>
        <name>[2Fe-2S] cluster</name>
        <dbReference type="ChEBI" id="CHEBI:190135"/>
    </ligand>
</feature>
<feature type="binding site" evidence="1">
    <location>
        <position position="168"/>
    </location>
    <ligand>
        <name>[2Fe-2S] cluster</name>
        <dbReference type="ChEBI" id="CHEBI:190135"/>
    </ligand>
</feature>
<feature type="binding site" evidence="1">
    <location>
        <position position="171"/>
    </location>
    <ligand>
        <name>[2Fe-2S] cluster</name>
        <dbReference type="ChEBI" id="CHEBI:190135"/>
    </ligand>
</feature>
<feature type="disulfide bond" evidence="1">
    <location>
        <begin position="156"/>
        <end position="170"/>
    </location>
</feature>
<feature type="sequence conflict" description="In Ref. 1; CAF21903." evidence="3" ref="1">
    <original>V</original>
    <variation>L</variation>
    <location>
        <position position="88"/>
    </location>
</feature>
<feature type="sequence conflict" description="In Ref. 1; CAF21903." evidence="3" ref="1">
    <original>TEYM</original>
    <variation>RNT</variation>
    <location>
        <begin position="137"/>
        <end position="140"/>
    </location>
</feature>
<evidence type="ECO:0000255" key="1">
    <source>
        <dbReference type="PROSITE-ProRule" id="PRU00628"/>
    </source>
</evidence>
<evidence type="ECO:0000269" key="2">
    <source>
    </source>
</evidence>
<evidence type="ECO:0000305" key="3"/>
<geneLocation type="plasmid">
    <name>pHM300</name>
</geneLocation>
<reference key="1">
    <citation type="journal article" date="2004" name="Biochim. Biophys. Acta">
        <title>Respiratory nitrate reductase from haloarchaeon Haloferax mediterranei: biochemical and genetic analysis.</title>
        <authorList>
            <person name="Lledo B."/>
            <person name="Martinez-Espinosa R.M."/>
            <person name="Marhuenda-Egea F.C."/>
            <person name="Bonete M.J."/>
        </authorList>
    </citation>
    <scope>NUCLEOTIDE SEQUENCE [GENOMIC DNA]</scope>
    <source>
        <strain>ATCC 33500 / DSM 1411 / JCM 8866 / NBRC 14739 / NCIMB 2177 / R-4</strain>
    </source>
</reference>
<reference key="2">
    <citation type="journal article" date="2012" name="J. Bacteriol.">
        <title>Complete genome sequence of the metabolically versatile halophilic archaeon Haloferax mediterranei, a poly(3-hydroxybutyrate-co-3-hydroxyvalerate) producer.</title>
        <authorList>
            <person name="Han J."/>
            <person name="Zhang F."/>
            <person name="Hou J."/>
            <person name="Liu X."/>
            <person name="Li M."/>
            <person name="Liu H."/>
            <person name="Cai L."/>
            <person name="Zhang B."/>
            <person name="Chen Y."/>
            <person name="Zhou J."/>
            <person name="Hu S."/>
            <person name="Xiang H."/>
        </authorList>
    </citation>
    <scope>NUCLEOTIDE SEQUENCE [LARGE SCALE GENOMIC DNA]</scope>
    <source>
        <strain>ATCC 33500 / DSM 1411 / JCM 8866 / NBRC 14739 / NCIMB 2177 / R-4</strain>
    </source>
</reference>
<reference key="3">
    <citation type="journal article" date="2014" name="PLoS Genet.">
        <title>Phylogenetically driven sequencing of extremely halophilic archaea reveals strategies for static and dynamic osmo-response.</title>
        <authorList>
            <person name="Becker E.A."/>
            <person name="Seitzer P.M."/>
            <person name="Tritt A."/>
            <person name="Larsen D."/>
            <person name="Krusor M."/>
            <person name="Yao A.I."/>
            <person name="Wu D."/>
            <person name="Madern D."/>
            <person name="Eisen J.A."/>
            <person name="Darling A.E."/>
            <person name="Facciotti M.T."/>
        </authorList>
    </citation>
    <scope>NUCLEOTIDE SEQUENCE [LARGE SCALE GENOMIC DNA]</scope>
    <source>
        <strain>ATCC 33500 / DSM 1411 / JCM 8866 / NBRC 14739 / NCIMB 2177 / R-4</strain>
    </source>
</reference>
<reference key="4">
    <citation type="journal article" date="2007" name="FEMS Microbiol. Lett.">
        <title>Look on the positive side! The orientation, identification and bioenergetics of 'Archaeal' membrane-bound nitrate reductases.</title>
        <authorList>
            <person name="Martinez-Espinosa R.M."/>
            <person name="Dridge E.J."/>
            <person name="Bonete M.J."/>
            <person name="Butt J.N."/>
            <person name="Butler C.S."/>
            <person name="Sargent F."/>
            <person name="Richardson D.J."/>
        </authorList>
    </citation>
    <scope>PUTATIVE REACTION MECHANISM</scope>
    <scope>SUBUNIT</scope>
</reference>
<name>NARB_HALMT</name>
<comment type="function">
    <text>The respiratory membrane-bound nitrate reductase enzyme complex plays a role in generation of metabolic energy by using nitrate as a terminal electron acceptor during anaerobic conditions. Proposed Rieske subunit involved in a protonmotive Q-cycle mechanism-based electron transfer electrons to the beta subunit.</text>
</comment>
<comment type="cofactor">
    <cofactor evidence="1">
        <name>[2Fe-2S] cluster</name>
        <dbReference type="ChEBI" id="CHEBI:190135"/>
    </cofactor>
    <text evidence="1">Binds 1 [2Fe-2S] cluster per subunit.</text>
</comment>
<comment type="subunit">
    <text evidence="2">Probable multiprotein complex; a catalytic heterodimer of an alpha and beta chain is proposed to associate with additional subunits involved in membrane attachment and electron transfer.</text>
</comment>
<comment type="subcellular location">
    <subcellularLocation>
        <location evidence="3">Cell membrane</location>
        <topology>Peripheral membrane protein</topology>
    </subcellularLocation>
</comment>
<protein>
    <recommendedName>
        <fullName>Putative respiratory nitrate reductase subunit Rieske</fullName>
    </recommendedName>
</protein>
<sequence>METDRQGSESGACDGCCSDCSDEGTQSQQPTIFTDTRASLARRDYAKLLASVGGLTAVASLTAPLAGLTRVFEREYTGPVYSDGIYLVDGDGNRIEEKALSEGEKMTVFPEPRPGIEKAPTLLVRHAEDAYSDAVKTEYMVAGYTAYSKVCTHAGCMVSNEEDGTLVCPCHFGKFDPTDGAAVVGGPPSRALPQLPITVSSEGYLIATGDFNGPVGPGGD</sequence>
<organism>
    <name type="scientific">Haloferax mediterranei (strain ATCC 33500 / DSM 1411 / JCM 8866 / NBRC 14739 / NCIMB 2177 / R-4)</name>
    <name type="common">Halobacterium mediterranei</name>
    <dbReference type="NCBI Taxonomy" id="523841"/>
    <lineage>
        <taxon>Archaea</taxon>
        <taxon>Methanobacteriati</taxon>
        <taxon>Methanobacteriota</taxon>
        <taxon>Stenosarchaea group</taxon>
        <taxon>Halobacteria</taxon>
        <taxon>Halobacteriales</taxon>
        <taxon>Haloferacaceae</taxon>
        <taxon>Haloferax</taxon>
    </lineage>
</organism>
<dbReference type="EMBL" id="AJ621877">
    <property type="protein sequence ID" value="CAF21903.1"/>
    <property type="molecule type" value="Genomic_DNA"/>
</dbReference>
<dbReference type="EMBL" id="CP001870">
    <property type="protein sequence ID" value="AFK20942.1"/>
    <property type="molecule type" value="Genomic_DNA"/>
</dbReference>
<dbReference type="EMBL" id="AOLO01000001">
    <property type="protein sequence ID" value="EMA05268.1"/>
    <property type="molecule type" value="Genomic_DNA"/>
</dbReference>
<dbReference type="RefSeq" id="WP_004056326.1">
    <property type="nucleotide sequence ID" value="NC_017943.1"/>
</dbReference>
<dbReference type="SMR" id="I3R9N2"/>
<dbReference type="GeneID" id="40158243"/>
<dbReference type="KEGG" id="hme:HFX_5107"/>
<dbReference type="HOGENOM" id="CLU_096353_1_0_2"/>
<dbReference type="OrthoDB" id="5623at2157"/>
<dbReference type="Proteomes" id="UP000006469">
    <property type="component" value="Plasmid pHM300"/>
</dbReference>
<dbReference type="Proteomes" id="UP000011603">
    <property type="component" value="Unassembled WGS sequence"/>
</dbReference>
<dbReference type="GO" id="GO:0005886">
    <property type="term" value="C:plasma membrane"/>
    <property type="evidence" value="ECO:0007669"/>
    <property type="project" value="UniProtKB-SubCell"/>
</dbReference>
<dbReference type="GO" id="GO:0051537">
    <property type="term" value="F:2 iron, 2 sulfur cluster binding"/>
    <property type="evidence" value="ECO:0007669"/>
    <property type="project" value="UniProtKB-KW"/>
</dbReference>
<dbReference type="GO" id="GO:0046872">
    <property type="term" value="F:metal ion binding"/>
    <property type="evidence" value="ECO:0007669"/>
    <property type="project" value="UniProtKB-KW"/>
</dbReference>
<dbReference type="GO" id="GO:0042128">
    <property type="term" value="P:nitrate assimilation"/>
    <property type="evidence" value="ECO:0007669"/>
    <property type="project" value="UniProtKB-KW"/>
</dbReference>
<dbReference type="CDD" id="cd03467">
    <property type="entry name" value="Rieske"/>
    <property type="match status" value="1"/>
</dbReference>
<dbReference type="Gene3D" id="2.102.10.10">
    <property type="entry name" value="Rieske [2Fe-2S] iron-sulphur domain"/>
    <property type="match status" value="1"/>
</dbReference>
<dbReference type="InterPro" id="IPR017941">
    <property type="entry name" value="Rieske_2Fe-2S"/>
</dbReference>
<dbReference type="InterPro" id="IPR036922">
    <property type="entry name" value="Rieske_2Fe-2S_sf"/>
</dbReference>
<dbReference type="InterPro" id="IPR014349">
    <property type="entry name" value="Rieske_Fe-S_prot"/>
</dbReference>
<dbReference type="PANTHER" id="PTHR10134">
    <property type="entry name" value="CYTOCHROME B-C1 COMPLEX SUBUNIT RIESKE, MITOCHONDRIAL"/>
    <property type="match status" value="1"/>
</dbReference>
<dbReference type="Pfam" id="PF00355">
    <property type="entry name" value="Rieske"/>
    <property type="match status" value="1"/>
</dbReference>
<dbReference type="SUPFAM" id="SSF50022">
    <property type="entry name" value="ISP domain"/>
    <property type="match status" value="1"/>
</dbReference>
<dbReference type="PROSITE" id="PS51296">
    <property type="entry name" value="RIESKE"/>
    <property type="match status" value="1"/>
</dbReference>
<gene>
    <name type="primary">narB</name>
    <name type="ordered locus">HFX_5107</name>
    <name type="ORF">C439_00675</name>
</gene>
<keyword id="KW-0001">2Fe-2S</keyword>
<keyword id="KW-1003">Cell membrane</keyword>
<keyword id="KW-1015">Disulfide bond</keyword>
<keyword id="KW-0249">Electron transport</keyword>
<keyword id="KW-0408">Iron</keyword>
<keyword id="KW-0411">Iron-sulfur</keyword>
<keyword id="KW-0472">Membrane</keyword>
<keyword id="KW-0479">Metal-binding</keyword>
<keyword id="KW-0534">Nitrate assimilation</keyword>
<keyword id="KW-0614">Plasmid</keyword>
<keyword id="KW-0813">Transport</keyword>